<protein>
    <recommendedName>
        <fullName evidence="1">Citrate lyase acyl carrier protein</fullName>
    </recommendedName>
    <alternativeName>
        <fullName evidence="1">Citrate lyase gamma chain</fullName>
    </alternativeName>
</protein>
<name>CITD_ECO8A</name>
<feature type="chain" id="PRO_1000133967" description="Citrate lyase acyl carrier protein">
    <location>
        <begin position="1"/>
        <end position="98"/>
    </location>
</feature>
<feature type="modified residue" description="O-(phosphoribosyl dephospho-coenzyme A)serine" evidence="1">
    <location>
        <position position="14"/>
    </location>
</feature>
<keyword id="KW-0963">Cytoplasm</keyword>
<keyword id="KW-0597">Phosphoprotein</keyword>
<proteinExistence type="inferred from homology"/>
<accession>B7M4U9</accession>
<reference key="1">
    <citation type="journal article" date="2009" name="PLoS Genet.">
        <title>Organised genome dynamics in the Escherichia coli species results in highly diverse adaptive paths.</title>
        <authorList>
            <person name="Touchon M."/>
            <person name="Hoede C."/>
            <person name="Tenaillon O."/>
            <person name="Barbe V."/>
            <person name="Baeriswyl S."/>
            <person name="Bidet P."/>
            <person name="Bingen E."/>
            <person name="Bonacorsi S."/>
            <person name="Bouchier C."/>
            <person name="Bouvet O."/>
            <person name="Calteau A."/>
            <person name="Chiapello H."/>
            <person name="Clermont O."/>
            <person name="Cruveiller S."/>
            <person name="Danchin A."/>
            <person name="Diard M."/>
            <person name="Dossat C."/>
            <person name="Karoui M.E."/>
            <person name="Frapy E."/>
            <person name="Garry L."/>
            <person name="Ghigo J.M."/>
            <person name="Gilles A.M."/>
            <person name="Johnson J."/>
            <person name="Le Bouguenec C."/>
            <person name="Lescat M."/>
            <person name="Mangenot S."/>
            <person name="Martinez-Jehanne V."/>
            <person name="Matic I."/>
            <person name="Nassif X."/>
            <person name="Oztas S."/>
            <person name="Petit M.A."/>
            <person name="Pichon C."/>
            <person name="Rouy Z."/>
            <person name="Ruf C.S."/>
            <person name="Schneider D."/>
            <person name="Tourret J."/>
            <person name="Vacherie B."/>
            <person name="Vallenet D."/>
            <person name="Medigue C."/>
            <person name="Rocha E.P.C."/>
            <person name="Denamur E."/>
        </authorList>
    </citation>
    <scope>NUCLEOTIDE SEQUENCE [LARGE SCALE GENOMIC DNA]</scope>
    <source>
        <strain>IAI1</strain>
    </source>
</reference>
<organism>
    <name type="scientific">Escherichia coli O8 (strain IAI1)</name>
    <dbReference type="NCBI Taxonomy" id="585034"/>
    <lineage>
        <taxon>Bacteria</taxon>
        <taxon>Pseudomonadati</taxon>
        <taxon>Pseudomonadota</taxon>
        <taxon>Gammaproteobacteria</taxon>
        <taxon>Enterobacterales</taxon>
        <taxon>Enterobacteriaceae</taxon>
        <taxon>Escherichia</taxon>
    </lineage>
</organism>
<comment type="function">
    <text evidence="1">Covalent carrier of the coenzyme of citrate lyase.</text>
</comment>
<comment type="subunit">
    <text evidence="1">Oligomer with a subunit composition of (alpha,beta,gamma)6.</text>
</comment>
<comment type="subcellular location">
    <subcellularLocation>
        <location evidence="1">Cytoplasm</location>
    </subcellularLocation>
</comment>
<comment type="similarity">
    <text evidence="1">Belongs to the CitD family.</text>
</comment>
<dbReference type="EMBL" id="CU928160">
    <property type="protein sequence ID" value="CAQ97471.1"/>
    <property type="molecule type" value="Genomic_DNA"/>
</dbReference>
<dbReference type="RefSeq" id="WP_000700703.1">
    <property type="nucleotide sequence ID" value="NC_011741.1"/>
</dbReference>
<dbReference type="SMR" id="B7M4U9"/>
<dbReference type="GeneID" id="93776868"/>
<dbReference type="KEGG" id="ecr:ECIAI1_0601"/>
<dbReference type="HOGENOM" id="CLU_158489_0_0_6"/>
<dbReference type="GO" id="GO:0005737">
    <property type="term" value="C:cytoplasm"/>
    <property type="evidence" value="ECO:0007669"/>
    <property type="project" value="UniProtKB-SubCell"/>
</dbReference>
<dbReference type="HAMAP" id="MF_00805">
    <property type="entry name" value="CitD"/>
    <property type="match status" value="1"/>
</dbReference>
<dbReference type="InterPro" id="IPR006495">
    <property type="entry name" value="CitD"/>
</dbReference>
<dbReference type="InterPro" id="IPR023439">
    <property type="entry name" value="Mal_deCO2ase/Cit_lyase_ACP"/>
</dbReference>
<dbReference type="NCBIfam" id="TIGR01608">
    <property type="entry name" value="citD"/>
    <property type="match status" value="1"/>
</dbReference>
<dbReference type="NCBIfam" id="NF009726">
    <property type="entry name" value="PRK13253.1"/>
    <property type="match status" value="1"/>
</dbReference>
<dbReference type="Pfam" id="PF06857">
    <property type="entry name" value="ACP"/>
    <property type="match status" value="1"/>
</dbReference>
<dbReference type="PIRSF" id="PIRSF002736">
    <property type="entry name" value="Citrt_lyas_gamma"/>
    <property type="match status" value="1"/>
</dbReference>
<gene>
    <name evidence="1" type="primary">citD</name>
    <name type="ordered locus">ECIAI1_0601</name>
</gene>
<evidence type="ECO:0000255" key="1">
    <source>
        <dbReference type="HAMAP-Rule" id="MF_00805"/>
    </source>
</evidence>
<sequence length="98" mass="10689">MKINQPAVAGTLESGDVMIRIAPLDTQDIDLQINSSVEKQFGDAIRTTILDVLARYNVRGVQLNVDDKGALDCILRARLEALLARASGIPALPWEDCQ</sequence>